<reference key="1">
    <citation type="journal article" date="2011" name="Stand. Genomic Sci.">
        <title>Complete genome sequence of Rhodospirillum rubrum type strain (S1).</title>
        <authorList>
            <person name="Munk A.C."/>
            <person name="Copeland A."/>
            <person name="Lucas S."/>
            <person name="Lapidus A."/>
            <person name="Del Rio T.G."/>
            <person name="Barry K."/>
            <person name="Detter J.C."/>
            <person name="Hammon N."/>
            <person name="Israni S."/>
            <person name="Pitluck S."/>
            <person name="Brettin T."/>
            <person name="Bruce D."/>
            <person name="Han C."/>
            <person name="Tapia R."/>
            <person name="Gilna P."/>
            <person name="Schmutz J."/>
            <person name="Larimer F."/>
            <person name="Land M."/>
            <person name="Kyrpides N.C."/>
            <person name="Mavromatis K."/>
            <person name="Richardson P."/>
            <person name="Rohde M."/>
            <person name="Goeker M."/>
            <person name="Klenk H.P."/>
            <person name="Zhang Y."/>
            <person name="Roberts G.P."/>
            <person name="Reslewic S."/>
            <person name="Schwartz D.C."/>
        </authorList>
    </citation>
    <scope>NUCLEOTIDE SEQUENCE [LARGE SCALE GENOMIC DNA]</scope>
    <source>
        <strain>ATCC 11170 / ATH 1.1.1 / DSM 467 / LMG 4362 / NCIMB 8255 / S1</strain>
    </source>
</reference>
<dbReference type="EC" id="2.7.1.130" evidence="1"/>
<dbReference type="EMBL" id="CP000230">
    <property type="protein sequence ID" value="ABC21386.1"/>
    <property type="molecule type" value="Genomic_DNA"/>
</dbReference>
<dbReference type="RefSeq" id="WP_011388340.1">
    <property type="nucleotide sequence ID" value="NC_007643.1"/>
</dbReference>
<dbReference type="RefSeq" id="YP_425673.1">
    <property type="nucleotide sequence ID" value="NC_007643.1"/>
</dbReference>
<dbReference type="SMR" id="Q2RWV9"/>
<dbReference type="STRING" id="269796.Rru_A0582"/>
<dbReference type="EnsemblBacteria" id="ABC21386">
    <property type="protein sequence ID" value="ABC21386"/>
    <property type="gene ID" value="Rru_A0582"/>
</dbReference>
<dbReference type="KEGG" id="rru:Rru_A0582"/>
<dbReference type="PATRIC" id="fig|269796.9.peg.636"/>
<dbReference type="eggNOG" id="COG1663">
    <property type="taxonomic scope" value="Bacteria"/>
</dbReference>
<dbReference type="HOGENOM" id="CLU_038816_0_0_5"/>
<dbReference type="PhylomeDB" id="Q2RWV9"/>
<dbReference type="UniPathway" id="UPA00359">
    <property type="reaction ID" value="UER00482"/>
</dbReference>
<dbReference type="Proteomes" id="UP000001929">
    <property type="component" value="Chromosome"/>
</dbReference>
<dbReference type="GO" id="GO:0005886">
    <property type="term" value="C:plasma membrane"/>
    <property type="evidence" value="ECO:0007669"/>
    <property type="project" value="TreeGrafter"/>
</dbReference>
<dbReference type="GO" id="GO:0005524">
    <property type="term" value="F:ATP binding"/>
    <property type="evidence" value="ECO:0007669"/>
    <property type="project" value="UniProtKB-UniRule"/>
</dbReference>
<dbReference type="GO" id="GO:0009029">
    <property type="term" value="F:tetraacyldisaccharide 4'-kinase activity"/>
    <property type="evidence" value="ECO:0007669"/>
    <property type="project" value="UniProtKB-UniRule"/>
</dbReference>
<dbReference type="GO" id="GO:0009245">
    <property type="term" value="P:lipid A biosynthetic process"/>
    <property type="evidence" value="ECO:0007669"/>
    <property type="project" value="UniProtKB-UniRule"/>
</dbReference>
<dbReference type="GO" id="GO:0009244">
    <property type="term" value="P:lipopolysaccharide core region biosynthetic process"/>
    <property type="evidence" value="ECO:0007669"/>
    <property type="project" value="TreeGrafter"/>
</dbReference>
<dbReference type="HAMAP" id="MF_00409">
    <property type="entry name" value="LpxK"/>
    <property type="match status" value="1"/>
</dbReference>
<dbReference type="InterPro" id="IPR003758">
    <property type="entry name" value="LpxK"/>
</dbReference>
<dbReference type="InterPro" id="IPR027417">
    <property type="entry name" value="P-loop_NTPase"/>
</dbReference>
<dbReference type="NCBIfam" id="TIGR00682">
    <property type="entry name" value="lpxK"/>
    <property type="match status" value="1"/>
</dbReference>
<dbReference type="PANTHER" id="PTHR42724">
    <property type="entry name" value="TETRAACYLDISACCHARIDE 4'-KINASE"/>
    <property type="match status" value="1"/>
</dbReference>
<dbReference type="PANTHER" id="PTHR42724:SF1">
    <property type="entry name" value="TETRAACYLDISACCHARIDE 4'-KINASE, MITOCHONDRIAL-RELATED"/>
    <property type="match status" value="1"/>
</dbReference>
<dbReference type="Pfam" id="PF02606">
    <property type="entry name" value="LpxK"/>
    <property type="match status" value="1"/>
</dbReference>
<dbReference type="SUPFAM" id="SSF52540">
    <property type="entry name" value="P-loop containing nucleoside triphosphate hydrolases"/>
    <property type="match status" value="1"/>
</dbReference>
<sequence>MRAPEFWHKDGFAARLLEPVGLVYAALTRHRVARPPGVRLGIPVVCVGNLTAGGAGKTPVALAVMDALRRRGVVGHFLSRGYGGKMEGPVAVDPVGHGPEDVGDEPLLLANSAPCWVSRNRASGGLVAEGAGAQAVVMDDGHQNPSLAKDLSLVVVDGGYGFGNGRYIPAGPLRESIEAGLARAGAVILIGSDSENLAARIPPHLKAGVPLLTARLEPGPEAARLVGRKVVAFAGIGRPEKFFATLTALGARVVARHPFADHYPYAEADIQPILDEAYGLGAVPVTTSKDAVRLPPDQRPQVDVVGVRVVFDEPLAFEALIDRLILGRLPS</sequence>
<name>LPXK_RHORT</name>
<protein>
    <recommendedName>
        <fullName evidence="1">Tetraacyldisaccharide 4'-kinase</fullName>
        <ecNumber evidence="1">2.7.1.130</ecNumber>
    </recommendedName>
    <alternativeName>
        <fullName evidence="1">Lipid A 4'-kinase</fullName>
    </alternativeName>
</protein>
<feature type="chain" id="PRO_0000229976" description="Tetraacyldisaccharide 4'-kinase">
    <location>
        <begin position="1"/>
        <end position="331"/>
    </location>
</feature>
<feature type="binding site" evidence="1">
    <location>
        <begin position="51"/>
        <end position="58"/>
    </location>
    <ligand>
        <name>ATP</name>
        <dbReference type="ChEBI" id="CHEBI:30616"/>
    </ligand>
</feature>
<proteinExistence type="inferred from homology"/>
<organism>
    <name type="scientific">Rhodospirillum rubrum (strain ATCC 11170 / ATH 1.1.1 / DSM 467 / LMG 4362 / NCIMB 8255 / S1)</name>
    <dbReference type="NCBI Taxonomy" id="269796"/>
    <lineage>
        <taxon>Bacteria</taxon>
        <taxon>Pseudomonadati</taxon>
        <taxon>Pseudomonadota</taxon>
        <taxon>Alphaproteobacteria</taxon>
        <taxon>Rhodospirillales</taxon>
        <taxon>Rhodospirillaceae</taxon>
        <taxon>Rhodospirillum</taxon>
    </lineage>
</organism>
<comment type="function">
    <text evidence="1">Transfers the gamma-phosphate of ATP to the 4'-position of a tetraacyldisaccharide 1-phosphate intermediate (termed DS-1-P) to form tetraacyldisaccharide 1,4'-bis-phosphate (lipid IVA).</text>
</comment>
<comment type="catalytic activity">
    <reaction evidence="1">
        <text>a lipid A disaccharide + ATP = a lipid IVA + ADP + H(+)</text>
        <dbReference type="Rhea" id="RHEA:67840"/>
        <dbReference type="ChEBI" id="CHEBI:15378"/>
        <dbReference type="ChEBI" id="CHEBI:30616"/>
        <dbReference type="ChEBI" id="CHEBI:176343"/>
        <dbReference type="ChEBI" id="CHEBI:176425"/>
        <dbReference type="ChEBI" id="CHEBI:456216"/>
        <dbReference type="EC" id="2.7.1.130"/>
    </reaction>
</comment>
<comment type="pathway">
    <text evidence="1">Glycolipid biosynthesis; lipid IV(A) biosynthesis; lipid IV(A) from (3R)-3-hydroxytetradecanoyl-[acyl-carrier-protein] and UDP-N-acetyl-alpha-D-glucosamine: step 6/6.</text>
</comment>
<comment type="similarity">
    <text evidence="1">Belongs to the LpxK family.</text>
</comment>
<evidence type="ECO:0000255" key="1">
    <source>
        <dbReference type="HAMAP-Rule" id="MF_00409"/>
    </source>
</evidence>
<keyword id="KW-0067">ATP-binding</keyword>
<keyword id="KW-0418">Kinase</keyword>
<keyword id="KW-0441">Lipid A biosynthesis</keyword>
<keyword id="KW-0444">Lipid biosynthesis</keyword>
<keyword id="KW-0443">Lipid metabolism</keyword>
<keyword id="KW-0547">Nucleotide-binding</keyword>
<keyword id="KW-1185">Reference proteome</keyword>
<keyword id="KW-0808">Transferase</keyword>
<accession>Q2RWV9</accession>
<gene>
    <name evidence="1" type="primary">lpxK</name>
    <name type="ordered locus">Rru_A0582</name>
</gene>